<proteinExistence type="evidence at transcript level"/>
<feature type="chain" id="PRO_0000339230" description="Suppressor of tumorigenicity 7 protein-like">
    <location>
        <begin position="1"/>
        <end position="555"/>
    </location>
</feature>
<feature type="transmembrane region" description="Helical" evidence="1">
    <location>
        <begin position="32"/>
        <end position="52"/>
    </location>
</feature>
<feature type="transmembrane region" description="Helical" evidence="1">
    <location>
        <begin position="76"/>
        <end position="96"/>
    </location>
</feature>
<feature type="transmembrane region" description="Helical" evidence="1">
    <location>
        <begin position="504"/>
        <end position="524"/>
    </location>
</feature>
<feature type="transmembrane region" description="Helical" evidence="1">
    <location>
        <begin position="531"/>
        <end position="551"/>
    </location>
</feature>
<reference key="1">
    <citation type="submission" date="2001-06" db="EMBL/GenBank/DDBJ databases">
        <title>Characterisation of the chicken HELG gene.</title>
        <authorList>
            <person name="Griffith E.M."/>
            <person name="Black D.M."/>
        </authorList>
    </citation>
    <scope>NUCLEOTIDE SEQUENCE [MRNA]</scope>
</reference>
<evidence type="ECO:0000255" key="1"/>
<evidence type="ECO:0000305" key="2"/>
<protein>
    <recommendedName>
        <fullName>Suppressor of tumorigenicity 7 protein-like</fullName>
    </recommendedName>
    <alternativeName>
        <fullName>Protein HELG</fullName>
    </alternativeName>
</protein>
<gene>
    <name type="primary">ST7L</name>
    <name type="synonym">HELG</name>
</gene>
<name>ST7L_CHICK</name>
<organism>
    <name type="scientific">Gallus gallus</name>
    <name type="common">Chicken</name>
    <dbReference type="NCBI Taxonomy" id="9031"/>
    <lineage>
        <taxon>Eukaryota</taxon>
        <taxon>Metazoa</taxon>
        <taxon>Chordata</taxon>
        <taxon>Craniata</taxon>
        <taxon>Vertebrata</taxon>
        <taxon>Euteleostomi</taxon>
        <taxon>Archelosauria</taxon>
        <taxon>Archosauria</taxon>
        <taxon>Dinosauria</taxon>
        <taxon>Saurischia</taxon>
        <taxon>Theropoda</taxon>
        <taxon>Coelurosauria</taxon>
        <taxon>Aves</taxon>
        <taxon>Neognathae</taxon>
        <taxon>Galloanserae</taxon>
        <taxon>Galliformes</taxon>
        <taxon>Phasianidae</taxon>
        <taxon>Phasianinae</taxon>
        <taxon>Gallus</taxon>
    </lineage>
</organism>
<accession>Q90YH8</accession>
<dbReference type="EMBL" id="AJ315665">
    <property type="protein sequence ID" value="CAC42399.1"/>
    <property type="molecule type" value="mRNA"/>
</dbReference>
<dbReference type="RefSeq" id="NP_989953.1">
    <property type="nucleotide sequence ID" value="NM_204622.1"/>
</dbReference>
<dbReference type="SMR" id="Q90YH8"/>
<dbReference type="FunCoup" id="Q90YH8">
    <property type="interactions" value="1576"/>
</dbReference>
<dbReference type="STRING" id="9031.ENSGALP00000002335"/>
<dbReference type="PaxDb" id="9031-ENSGALP00000039408"/>
<dbReference type="GeneID" id="395331"/>
<dbReference type="KEGG" id="gga:395331"/>
<dbReference type="CTD" id="54879"/>
<dbReference type="VEuPathDB" id="HostDB:geneid_395331"/>
<dbReference type="eggNOG" id="KOG3807">
    <property type="taxonomic scope" value="Eukaryota"/>
</dbReference>
<dbReference type="HOGENOM" id="CLU_035578_2_0_1"/>
<dbReference type="InParanoid" id="Q90YH8"/>
<dbReference type="OrthoDB" id="5914722at2759"/>
<dbReference type="PhylomeDB" id="Q90YH8"/>
<dbReference type="PRO" id="PR:Q90YH8"/>
<dbReference type="Proteomes" id="UP000000539">
    <property type="component" value="Unassembled WGS sequence"/>
</dbReference>
<dbReference type="GO" id="GO:0016020">
    <property type="term" value="C:membrane"/>
    <property type="evidence" value="ECO:0007669"/>
    <property type="project" value="UniProtKB-SubCell"/>
</dbReference>
<dbReference type="CDD" id="cd11557">
    <property type="entry name" value="ST7"/>
    <property type="match status" value="1"/>
</dbReference>
<dbReference type="Gene3D" id="1.25.40.10">
    <property type="entry name" value="Tetratricopeptide repeat domain"/>
    <property type="match status" value="1"/>
</dbReference>
<dbReference type="InterPro" id="IPR007311">
    <property type="entry name" value="ST7"/>
</dbReference>
<dbReference type="InterPro" id="IPR011990">
    <property type="entry name" value="TPR-like_helical_dom_sf"/>
</dbReference>
<dbReference type="PANTHER" id="PTHR12745">
    <property type="entry name" value="SUPPRESSION OF TUMORIGENICITY 7"/>
    <property type="match status" value="1"/>
</dbReference>
<dbReference type="PANTHER" id="PTHR12745:SF4">
    <property type="entry name" value="SUPPRESSOR OF TUMORIGENICITY 7 PROTEIN-LIKE"/>
    <property type="match status" value="1"/>
</dbReference>
<dbReference type="Pfam" id="PF04184">
    <property type="entry name" value="ST7"/>
    <property type="match status" value="1"/>
</dbReference>
<comment type="subcellular location">
    <subcellularLocation>
        <location evidence="2">Membrane</location>
        <topology evidence="2">Multi-pass membrane protein</topology>
    </subcellularLocation>
</comment>
<comment type="similarity">
    <text evidence="2">Belongs to the ST7 family.</text>
</comment>
<keyword id="KW-0472">Membrane</keyword>
<keyword id="KW-1185">Reference proteome</keyword>
<keyword id="KW-0812">Transmembrane</keyword>
<keyword id="KW-1133">Transmembrane helix</keyword>
<sequence length="555" mass="62862">MADGCGTGKEPPYPGAAAALRRWEQLRRRAAAPWARGLLAVAAGLGLFYAALRVPLRLRDGLAAVTVFLSTLTPKFYFALTVTSSFISGLIFVFEWWHFRKYGTSFIEQVSVSHLRPLIGGVENSPPAPAAFSAGENEANRQNMPECKMWRNPLNLFRGAEYSRYMWVTGKEPLTYYDMNLSAQDHQNFFTCDTDALRPSDTVMQKAWRERNPQARIKAAYQALELNNDCATAYVLLAEEEATTIVDAERYFKQALKAGEMIYRKSQNCHSQSPQHEAQLRRDTNVLVYVKRRLAMCARKLGRIRESVKMMRDLMKEFPLLSMLNIHENLLEALLELQAYADVQAVLAKYDDISLPKSAAICYTAALLKARAVSERFSPETAFKRGLSTAEINAVEAIHRAVEFNPHVPKYLLEMKSLVLPPEHILKRGDSEAVAYAFFHLQHWKRIEGALHLLHCTWEGTFRMIPYPLEKGHLFYPYPSCTETADRELLPTFHEVSVYPQKELPFFIHFTAGLCSFSAMLALLTHQFPELMVVFAKAVLRVLWPVSAPSVLASG</sequence>